<dbReference type="EMBL" id="AE000782">
    <property type="protein sequence ID" value="AAB90343.1"/>
    <property type="molecule type" value="Genomic_DNA"/>
</dbReference>
<dbReference type="PIR" id="H69363">
    <property type="entry name" value="H69363"/>
</dbReference>
<dbReference type="RefSeq" id="WP_010878412.1">
    <property type="nucleotide sequence ID" value="NC_000917.1"/>
</dbReference>
<dbReference type="STRING" id="224325.AF_0912"/>
<dbReference type="PaxDb" id="224325-AF_0912"/>
<dbReference type="EnsemblBacteria" id="AAB90343">
    <property type="protein sequence ID" value="AAB90343"/>
    <property type="gene ID" value="AF_0912"/>
</dbReference>
<dbReference type="GeneID" id="1484135"/>
<dbReference type="KEGG" id="afu:AF_0912"/>
<dbReference type="eggNOG" id="arCOG06913">
    <property type="taxonomic scope" value="Archaea"/>
</dbReference>
<dbReference type="HOGENOM" id="CLU_482025_0_0_2"/>
<dbReference type="Proteomes" id="UP000002199">
    <property type="component" value="Chromosome"/>
</dbReference>
<reference key="1">
    <citation type="journal article" date="1997" name="Nature">
        <title>The complete genome sequence of the hyperthermophilic, sulphate-reducing archaeon Archaeoglobus fulgidus.</title>
        <authorList>
            <person name="Klenk H.-P."/>
            <person name="Clayton R.A."/>
            <person name="Tomb J.-F."/>
            <person name="White O."/>
            <person name="Nelson K.E."/>
            <person name="Ketchum K.A."/>
            <person name="Dodson R.J."/>
            <person name="Gwinn M.L."/>
            <person name="Hickey E.K."/>
            <person name="Peterson J.D."/>
            <person name="Richardson D.L."/>
            <person name="Kerlavage A.R."/>
            <person name="Graham D.E."/>
            <person name="Kyrpides N.C."/>
            <person name="Fleischmann R.D."/>
            <person name="Quackenbush J."/>
            <person name="Lee N.H."/>
            <person name="Sutton G.G."/>
            <person name="Gill S.R."/>
            <person name="Kirkness E.F."/>
            <person name="Dougherty B.A."/>
            <person name="McKenney K."/>
            <person name="Adams M.D."/>
            <person name="Loftus B.J."/>
            <person name="Peterson S.N."/>
            <person name="Reich C.I."/>
            <person name="McNeil L.K."/>
            <person name="Badger J.H."/>
            <person name="Glodek A."/>
            <person name="Zhou L."/>
            <person name="Overbeek R."/>
            <person name="Gocayne J.D."/>
            <person name="Weidman J.F."/>
            <person name="McDonald L.A."/>
            <person name="Utterback T.R."/>
            <person name="Cotton M.D."/>
            <person name="Spriggs T."/>
            <person name="Artiach P."/>
            <person name="Kaine B.P."/>
            <person name="Sykes S.M."/>
            <person name="Sadow P.W."/>
            <person name="D'Andrea K.P."/>
            <person name="Bowman C."/>
            <person name="Fujii C."/>
            <person name="Garland S.A."/>
            <person name="Mason T.M."/>
            <person name="Olsen G.J."/>
            <person name="Fraser C.M."/>
            <person name="Smith H.O."/>
            <person name="Woese C.R."/>
            <person name="Venter J.C."/>
        </authorList>
    </citation>
    <scope>NUCLEOTIDE SEQUENCE [LARGE SCALE GENOMIC DNA]</scope>
    <source>
        <strain>ATCC 49558 / DSM 4304 / JCM 9628 / NBRC 100126 / VC-16</strain>
    </source>
</reference>
<keyword id="KW-1185">Reference proteome</keyword>
<keyword id="KW-0732">Signal</keyword>
<organism>
    <name type="scientific">Archaeoglobus fulgidus (strain ATCC 49558 / DSM 4304 / JCM 9628 / NBRC 100126 / VC-16)</name>
    <dbReference type="NCBI Taxonomy" id="224325"/>
    <lineage>
        <taxon>Archaea</taxon>
        <taxon>Methanobacteriati</taxon>
        <taxon>Methanobacteriota</taxon>
        <taxon>Archaeoglobi</taxon>
        <taxon>Archaeoglobales</taxon>
        <taxon>Archaeoglobaceae</taxon>
        <taxon>Archaeoglobus</taxon>
    </lineage>
</organism>
<evidence type="ECO:0000255" key="1"/>
<evidence type="ECO:0000256" key="2">
    <source>
        <dbReference type="SAM" id="MobiDB-lite"/>
    </source>
</evidence>
<proteinExistence type="inferred from homology"/>
<feature type="signal peptide" evidence="1">
    <location>
        <begin position="1"/>
        <end position="19"/>
    </location>
</feature>
<feature type="chain" id="PRO_0000013647" description="Uncharacterized protein AF_0912">
    <location>
        <begin position="20"/>
        <end position="565"/>
    </location>
</feature>
<feature type="region of interest" description="Disordered" evidence="2">
    <location>
        <begin position="494"/>
        <end position="525"/>
    </location>
</feature>
<feature type="compositionally biased region" description="Polar residues" evidence="2">
    <location>
        <begin position="494"/>
        <end position="504"/>
    </location>
</feature>
<feature type="compositionally biased region" description="Low complexity" evidence="2">
    <location>
        <begin position="505"/>
        <end position="519"/>
    </location>
</feature>
<name>Y912_ARCFU</name>
<gene>
    <name type="ordered locus">AF_0912</name>
</gene>
<protein>
    <recommendedName>
        <fullName>Uncharacterized protein AF_0912</fullName>
    </recommendedName>
</protein>
<sequence length="565" mass="62740">MRWLATFVALLIAISSVSAAEVHIFVDKESVNLGDQIRFQVYFEVNRSADIAVVGDGGDGALLCHVDEGEDLYEKCGEEWVFRIPEDWQEGTYRLKVVIDDTEPEEHSEEFKVVKPKIKEFELKNLVYQSRTELEVLVESANPASLKLRLYGNNVDLYYEETADYEEESNVYSAKFDLNLREVYERTRDIADAVKPGKYILDLKLEYGGKVWDSRRVTVSVVKPEVAVSAPEKVKVGEPVVVSIDTNRVGDTEYDGILVVLEGNNFLLYKKAYLDENGKAKVQFETAGLREGKYAIYVRDTSKTSTLSISDLAKNYYDLPPDNSFSRIIQAEDDVLVKKELWIVGNGKESVKVILQPSKAEIFNGTTMSFKVLLNQSVELSSFEFVIFVSGNSVKIESVTLPDGFRLLDKTLYPDYLKISAYTTNKTKTGFLAEVKVAAQSPGESRLLIKNAGVYNGLGEFVDVTTSQADVVVKESRKEGNTANVSITLKENATGAENVTNNSVTATTPPAKASQQTPAPATPPVSMNVGEIDFTKVFMFTAGFLATYSAGRIMMRKLSARGGKR</sequence>
<accession>O29350</accession>